<name>IQCF5_MOUSE</name>
<gene>
    <name type="primary">Iqcf5</name>
</gene>
<keyword id="KW-1185">Reference proteome</keyword>
<keyword id="KW-0677">Repeat</keyword>
<sequence length="148" mass="17809">MGPEKSTAMTETSAAVRIQAWWRGTLLRRTLLHAALSAWIIQCWWRKIMIMLQGKKRRMALELYARKTWAIVKLQSWFRMWHIRHRYCRLLNAVRIIQVYWRWHSCHTRGFIQGNYEIKENRLNIQLEISLGSQACKVEQCITLPIKE</sequence>
<evidence type="ECO:0000255" key="1">
    <source>
        <dbReference type="PROSITE-ProRule" id="PRU00116"/>
    </source>
</evidence>
<feature type="chain" id="PRO_0000345957" description="IQ domain-containing protein F5">
    <location>
        <begin position="1"/>
        <end position="148"/>
    </location>
</feature>
<feature type="domain" description="IQ 1" evidence="1">
    <location>
        <begin position="11"/>
        <end position="40"/>
    </location>
</feature>
<feature type="domain" description="IQ 2" evidence="1">
    <location>
        <begin position="67"/>
        <end position="96"/>
    </location>
</feature>
<organism>
    <name type="scientific">Mus musculus</name>
    <name type="common">Mouse</name>
    <dbReference type="NCBI Taxonomy" id="10090"/>
    <lineage>
        <taxon>Eukaryota</taxon>
        <taxon>Metazoa</taxon>
        <taxon>Chordata</taxon>
        <taxon>Craniata</taxon>
        <taxon>Vertebrata</taxon>
        <taxon>Euteleostomi</taxon>
        <taxon>Mammalia</taxon>
        <taxon>Eutheria</taxon>
        <taxon>Euarchontoglires</taxon>
        <taxon>Glires</taxon>
        <taxon>Rodentia</taxon>
        <taxon>Myomorpha</taxon>
        <taxon>Muroidea</taxon>
        <taxon>Muridae</taxon>
        <taxon>Murinae</taxon>
        <taxon>Mus</taxon>
        <taxon>Mus</taxon>
    </lineage>
</organism>
<dbReference type="EMBL" id="AK005734">
    <property type="protein sequence ID" value="BAB24212.1"/>
    <property type="molecule type" value="mRNA"/>
</dbReference>
<dbReference type="EMBL" id="BC125546">
    <property type="protein sequence ID" value="AAI25547.1"/>
    <property type="molecule type" value="mRNA"/>
</dbReference>
<dbReference type="CCDS" id="CCDS52912.1"/>
<dbReference type="RefSeq" id="NP_083576.1">
    <property type="nucleotide sequence ID" value="NM_029300.1"/>
</dbReference>
<dbReference type="SMR" id="Q9DAL7"/>
<dbReference type="FunCoup" id="Q9DAL7">
    <property type="interactions" value="1"/>
</dbReference>
<dbReference type="STRING" id="10090.ENSMUSP00000082194"/>
<dbReference type="PaxDb" id="10090-ENSMUSP00000082194"/>
<dbReference type="ProteomicsDB" id="269503"/>
<dbReference type="Antibodypedia" id="63832">
    <property type="antibodies" value="1 antibodies from 1 providers"/>
</dbReference>
<dbReference type="Ensembl" id="ENSMUST00000085113.5">
    <property type="protein sequence ID" value="ENSMUSP00000082194.4"/>
    <property type="gene ID" value="ENSMUSG00000066382.5"/>
</dbReference>
<dbReference type="GeneID" id="75470"/>
<dbReference type="KEGG" id="mmu:75470"/>
<dbReference type="UCSC" id="uc009rkf.1">
    <property type="organism name" value="mouse"/>
</dbReference>
<dbReference type="AGR" id="MGI:1922720"/>
<dbReference type="CTD" id="389124"/>
<dbReference type="MGI" id="MGI:1922720">
    <property type="gene designation" value="Iqcf5"/>
</dbReference>
<dbReference type="VEuPathDB" id="HostDB:ENSMUSG00000066382"/>
<dbReference type="eggNOG" id="ENOG502TCZD">
    <property type="taxonomic scope" value="Eukaryota"/>
</dbReference>
<dbReference type="GeneTree" id="ENSGT00390000004641"/>
<dbReference type="HOGENOM" id="CLU_114989_0_0_1"/>
<dbReference type="InParanoid" id="Q9DAL7"/>
<dbReference type="OMA" id="YWRWHIC"/>
<dbReference type="OrthoDB" id="252964at2759"/>
<dbReference type="PhylomeDB" id="Q9DAL7"/>
<dbReference type="TreeFam" id="TF337908"/>
<dbReference type="BioGRID-ORCS" id="75470">
    <property type="hits" value="2 hits in 75 CRISPR screens"/>
</dbReference>
<dbReference type="PRO" id="PR:Q9DAL7"/>
<dbReference type="Proteomes" id="UP000000589">
    <property type="component" value="Chromosome 9"/>
</dbReference>
<dbReference type="RNAct" id="Q9DAL7">
    <property type="molecule type" value="protein"/>
</dbReference>
<dbReference type="Bgee" id="ENSMUSG00000066382">
    <property type="expression patterns" value="Expressed in seminiferous tubule of testis and 27 other cell types or tissues"/>
</dbReference>
<dbReference type="FunFam" id="1.20.5.190:FF:000014">
    <property type="entry name" value="IQ motif containing F5"/>
    <property type="match status" value="1"/>
</dbReference>
<dbReference type="FunFam" id="1.20.5.190:FF:000015">
    <property type="entry name" value="IQ motif containing F5"/>
    <property type="match status" value="1"/>
</dbReference>
<dbReference type="Gene3D" id="1.20.5.190">
    <property type="match status" value="2"/>
</dbReference>
<dbReference type="InterPro" id="IPR000048">
    <property type="entry name" value="IQ_motif_EF-hand-BS"/>
</dbReference>
<dbReference type="InterPro" id="IPR039887">
    <property type="entry name" value="IQCF"/>
</dbReference>
<dbReference type="PANTHER" id="PTHR21633:SF24">
    <property type="entry name" value="IQ DOMAIN-CONTAINING PROTEIN F5"/>
    <property type="match status" value="1"/>
</dbReference>
<dbReference type="PANTHER" id="PTHR21633">
    <property type="entry name" value="IQ MOTIF CONTAINING F"/>
    <property type="match status" value="1"/>
</dbReference>
<dbReference type="Pfam" id="PF00612">
    <property type="entry name" value="IQ"/>
    <property type="match status" value="2"/>
</dbReference>
<dbReference type="SMART" id="SM00015">
    <property type="entry name" value="IQ"/>
    <property type="match status" value="2"/>
</dbReference>
<dbReference type="PROSITE" id="PS50096">
    <property type="entry name" value="IQ"/>
    <property type="match status" value="2"/>
</dbReference>
<proteinExistence type="evidence at transcript level"/>
<accession>Q9DAL7</accession>
<protein>
    <recommendedName>
        <fullName>IQ domain-containing protein F5</fullName>
    </recommendedName>
</protein>
<reference key="1">
    <citation type="journal article" date="2005" name="Science">
        <title>The transcriptional landscape of the mammalian genome.</title>
        <authorList>
            <person name="Carninci P."/>
            <person name="Kasukawa T."/>
            <person name="Katayama S."/>
            <person name="Gough J."/>
            <person name="Frith M.C."/>
            <person name="Maeda N."/>
            <person name="Oyama R."/>
            <person name="Ravasi T."/>
            <person name="Lenhard B."/>
            <person name="Wells C."/>
            <person name="Kodzius R."/>
            <person name="Shimokawa K."/>
            <person name="Bajic V.B."/>
            <person name="Brenner S.E."/>
            <person name="Batalov S."/>
            <person name="Forrest A.R."/>
            <person name="Zavolan M."/>
            <person name="Davis M.J."/>
            <person name="Wilming L.G."/>
            <person name="Aidinis V."/>
            <person name="Allen J.E."/>
            <person name="Ambesi-Impiombato A."/>
            <person name="Apweiler R."/>
            <person name="Aturaliya R.N."/>
            <person name="Bailey T.L."/>
            <person name="Bansal M."/>
            <person name="Baxter L."/>
            <person name="Beisel K.W."/>
            <person name="Bersano T."/>
            <person name="Bono H."/>
            <person name="Chalk A.M."/>
            <person name="Chiu K.P."/>
            <person name="Choudhary V."/>
            <person name="Christoffels A."/>
            <person name="Clutterbuck D.R."/>
            <person name="Crowe M.L."/>
            <person name="Dalla E."/>
            <person name="Dalrymple B.P."/>
            <person name="de Bono B."/>
            <person name="Della Gatta G."/>
            <person name="di Bernardo D."/>
            <person name="Down T."/>
            <person name="Engstrom P."/>
            <person name="Fagiolini M."/>
            <person name="Faulkner G."/>
            <person name="Fletcher C.F."/>
            <person name="Fukushima T."/>
            <person name="Furuno M."/>
            <person name="Futaki S."/>
            <person name="Gariboldi M."/>
            <person name="Georgii-Hemming P."/>
            <person name="Gingeras T.R."/>
            <person name="Gojobori T."/>
            <person name="Green R.E."/>
            <person name="Gustincich S."/>
            <person name="Harbers M."/>
            <person name="Hayashi Y."/>
            <person name="Hensch T.K."/>
            <person name="Hirokawa N."/>
            <person name="Hill D."/>
            <person name="Huminiecki L."/>
            <person name="Iacono M."/>
            <person name="Ikeo K."/>
            <person name="Iwama A."/>
            <person name="Ishikawa T."/>
            <person name="Jakt M."/>
            <person name="Kanapin A."/>
            <person name="Katoh M."/>
            <person name="Kawasawa Y."/>
            <person name="Kelso J."/>
            <person name="Kitamura H."/>
            <person name="Kitano H."/>
            <person name="Kollias G."/>
            <person name="Krishnan S.P."/>
            <person name="Kruger A."/>
            <person name="Kummerfeld S.K."/>
            <person name="Kurochkin I.V."/>
            <person name="Lareau L.F."/>
            <person name="Lazarevic D."/>
            <person name="Lipovich L."/>
            <person name="Liu J."/>
            <person name="Liuni S."/>
            <person name="McWilliam S."/>
            <person name="Madan Babu M."/>
            <person name="Madera M."/>
            <person name="Marchionni L."/>
            <person name="Matsuda H."/>
            <person name="Matsuzawa S."/>
            <person name="Miki H."/>
            <person name="Mignone F."/>
            <person name="Miyake S."/>
            <person name="Morris K."/>
            <person name="Mottagui-Tabar S."/>
            <person name="Mulder N."/>
            <person name="Nakano N."/>
            <person name="Nakauchi H."/>
            <person name="Ng P."/>
            <person name="Nilsson R."/>
            <person name="Nishiguchi S."/>
            <person name="Nishikawa S."/>
            <person name="Nori F."/>
            <person name="Ohara O."/>
            <person name="Okazaki Y."/>
            <person name="Orlando V."/>
            <person name="Pang K.C."/>
            <person name="Pavan W.J."/>
            <person name="Pavesi G."/>
            <person name="Pesole G."/>
            <person name="Petrovsky N."/>
            <person name="Piazza S."/>
            <person name="Reed J."/>
            <person name="Reid J.F."/>
            <person name="Ring B.Z."/>
            <person name="Ringwald M."/>
            <person name="Rost B."/>
            <person name="Ruan Y."/>
            <person name="Salzberg S.L."/>
            <person name="Sandelin A."/>
            <person name="Schneider C."/>
            <person name="Schoenbach C."/>
            <person name="Sekiguchi K."/>
            <person name="Semple C.A."/>
            <person name="Seno S."/>
            <person name="Sessa L."/>
            <person name="Sheng Y."/>
            <person name="Shibata Y."/>
            <person name="Shimada H."/>
            <person name="Shimada K."/>
            <person name="Silva D."/>
            <person name="Sinclair B."/>
            <person name="Sperling S."/>
            <person name="Stupka E."/>
            <person name="Sugiura K."/>
            <person name="Sultana R."/>
            <person name="Takenaka Y."/>
            <person name="Taki K."/>
            <person name="Tammoja K."/>
            <person name="Tan S.L."/>
            <person name="Tang S."/>
            <person name="Taylor M.S."/>
            <person name="Tegner J."/>
            <person name="Teichmann S.A."/>
            <person name="Ueda H.R."/>
            <person name="van Nimwegen E."/>
            <person name="Verardo R."/>
            <person name="Wei C.L."/>
            <person name="Yagi K."/>
            <person name="Yamanishi H."/>
            <person name="Zabarovsky E."/>
            <person name="Zhu S."/>
            <person name="Zimmer A."/>
            <person name="Hide W."/>
            <person name="Bult C."/>
            <person name="Grimmond S.M."/>
            <person name="Teasdale R.D."/>
            <person name="Liu E.T."/>
            <person name="Brusic V."/>
            <person name="Quackenbush J."/>
            <person name="Wahlestedt C."/>
            <person name="Mattick J.S."/>
            <person name="Hume D.A."/>
            <person name="Kai C."/>
            <person name="Sasaki D."/>
            <person name="Tomaru Y."/>
            <person name="Fukuda S."/>
            <person name="Kanamori-Katayama M."/>
            <person name="Suzuki M."/>
            <person name="Aoki J."/>
            <person name="Arakawa T."/>
            <person name="Iida J."/>
            <person name="Imamura K."/>
            <person name="Itoh M."/>
            <person name="Kato T."/>
            <person name="Kawaji H."/>
            <person name="Kawagashira N."/>
            <person name="Kawashima T."/>
            <person name="Kojima M."/>
            <person name="Kondo S."/>
            <person name="Konno H."/>
            <person name="Nakano K."/>
            <person name="Ninomiya N."/>
            <person name="Nishio T."/>
            <person name="Okada M."/>
            <person name="Plessy C."/>
            <person name="Shibata K."/>
            <person name="Shiraki T."/>
            <person name="Suzuki S."/>
            <person name="Tagami M."/>
            <person name="Waki K."/>
            <person name="Watahiki A."/>
            <person name="Okamura-Oho Y."/>
            <person name="Suzuki H."/>
            <person name="Kawai J."/>
            <person name="Hayashizaki Y."/>
        </authorList>
    </citation>
    <scope>NUCLEOTIDE SEQUENCE [LARGE SCALE MRNA]</scope>
    <source>
        <strain>C57BL/6J</strain>
        <tissue>Testis</tissue>
    </source>
</reference>
<reference key="2">
    <citation type="journal article" date="2004" name="Genome Res.">
        <title>The status, quality, and expansion of the NIH full-length cDNA project: the Mammalian Gene Collection (MGC).</title>
        <authorList>
            <consortium name="The MGC Project Team"/>
        </authorList>
    </citation>
    <scope>NUCLEOTIDE SEQUENCE [LARGE SCALE MRNA]</scope>
    <source>
        <tissue>Brain</tissue>
    </source>
</reference>